<evidence type="ECO:0000255" key="1">
    <source>
        <dbReference type="PROSITE-ProRule" id="PRU00094"/>
    </source>
</evidence>
<evidence type="ECO:0000256" key="2">
    <source>
        <dbReference type="SAM" id="MobiDB-lite"/>
    </source>
</evidence>
<evidence type="ECO:0000269" key="3">
    <source>
    </source>
</evidence>
<evidence type="ECO:0000305" key="4"/>
<feature type="chain" id="PRO_0000083475" description="Transcription factor gaf1">
    <location>
        <begin position="1"/>
        <end position="855"/>
    </location>
</feature>
<feature type="zinc finger region" description="GATA-type" evidence="1">
    <location>
        <begin position="635"/>
        <end position="659"/>
    </location>
</feature>
<feature type="region of interest" description="Disordered" evidence="2">
    <location>
        <begin position="72"/>
        <end position="126"/>
    </location>
</feature>
<feature type="region of interest" description="Disordered" evidence="2">
    <location>
        <begin position="149"/>
        <end position="184"/>
    </location>
</feature>
<feature type="region of interest" description="Disordered" evidence="2">
    <location>
        <begin position="229"/>
        <end position="287"/>
    </location>
</feature>
<feature type="region of interest" description="Disordered" evidence="2">
    <location>
        <begin position="412"/>
        <end position="483"/>
    </location>
</feature>
<feature type="region of interest" description="Disordered" evidence="2">
    <location>
        <begin position="602"/>
        <end position="643"/>
    </location>
</feature>
<feature type="region of interest" description="Disordered" evidence="2">
    <location>
        <begin position="680"/>
        <end position="768"/>
    </location>
</feature>
<feature type="compositionally biased region" description="Polar residues" evidence="2">
    <location>
        <begin position="72"/>
        <end position="112"/>
    </location>
</feature>
<feature type="compositionally biased region" description="Basic and acidic residues" evidence="2">
    <location>
        <begin position="149"/>
        <end position="168"/>
    </location>
</feature>
<feature type="compositionally biased region" description="Low complexity" evidence="2">
    <location>
        <begin position="240"/>
        <end position="250"/>
    </location>
</feature>
<feature type="compositionally biased region" description="Low complexity" evidence="2">
    <location>
        <begin position="428"/>
        <end position="444"/>
    </location>
</feature>
<feature type="compositionally biased region" description="Polar residues" evidence="2">
    <location>
        <begin position="445"/>
        <end position="476"/>
    </location>
</feature>
<feature type="compositionally biased region" description="Basic and acidic residues" evidence="2">
    <location>
        <begin position="614"/>
        <end position="623"/>
    </location>
</feature>
<feature type="compositionally biased region" description="Low complexity" evidence="2">
    <location>
        <begin position="625"/>
        <end position="643"/>
    </location>
</feature>
<feature type="compositionally biased region" description="Low complexity" evidence="2">
    <location>
        <begin position="707"/>
        <end position="717"/>
    </location>
</feature>
<feature type="compositionally biased region" description="Low complexity" evidence="2">
    <location>
        <begin position="755"/>
        <end position="767"/>
    </location>
</feature>
<feature type="modified residue" description="Phosphoserine" evidence="3">
    <location>
        <position position="150"/>
    </location>
</feature>
<feature type="modified residue" description="Phosphoserine" evidence="3">
    <location>
        <position position="727"/>
    </location>
</feature>
<feature type="modified residue" description="Phosphoserine" evidence="3">
    <location>
        <position position="729"/>
    </location>
</feature>
<name>GAF1_SCHPO</name>
<dbReference type="EMBL" id="CU329672">
    <property type="protein sequence ID" value="CAB40003.2"/>
    <property type="molecule type" value="Genomic_DNA"/>
</dbReference>
<dbReference type="EMBL" id="L31601">
    <property type="protein sequence ID" value="AAC35593.1"/>
    <property type="molecule type" value="Genomic_DNA"/>
</dbReference>
<dbReference type="PIR" id="T41336">
    <property type="entry name" value="T41336"/>
</dbReference>
<dbReference type="RefSeq" id="NP_588278.2">
    <property type="nucleotide sequence ID" value="NM_001023268.2"/>
</dbReference>
<dbReference type="SMR" id="Q10280"/>
<dbReference type="BioGRID" id="275597">
    <property type="interactions" value="4"/>
</dbReference>
<dbReference type="STRING" id="284812.Q10280"/>
<dbReference type="iPTMnet" id="Q10280"/>
<dbReference type="PaxDb" id="4896-SPCC1902.01.1"/>
<dbReference type="EnsemblFungi" id="SPCC1902.01.1">
    <property type="protein sequence ID" value="SPCC1902.01.1:pep"/>
    <property type="gene ID" value="SPCC1902.01"/>
</dbReference>
<dbReference type="GeneID" id="2539024"/>
<dbReference type="KEGG" id="spo:2539024"/>
<dbReference type="PomBase" id="SPCC1902.01">
    <property type="gene designation" value="gaf1"/>
</dbReference>
<dbReference type="VEuPathDB" id="FungiDB:SPCC1902.01"/>
<dbReference type="eggNOG" id="KOG1601">
    <property type="taxonomic scope" value="Eukaryota"/>
</dbReference>
<dbReference type="HOGENOM" id="CLU_336200_0_0_1"/>
<dbReference type="InParanoid" id="Q10280"/>
<dbReference type="OMA" id="FMKINGV"/>
<dbReference type="PhylomeDB" id="Q10280"/>
<dbReference type="Reactome" id="R-SPO-9018519">
    <property type="pathway name" value="Estrogen-dependent gene expression"/>
</dbReference>
<dbReference type="PRO" id="PR:Q10280"/>
<dbReference type="Proteomes" id="UP000002485">
    <property type="component" value="Chromosome III"/>
</dbReference>
<dbReference type="GO" id="GO:0032153">
    <property type="term" value="C:cell division site"/>
    <property type="evidence" value="ECO:0007005"/>
    <property type="project" value="PomBase"/>
</dbReference>
<dbReference type="GO" id="GO:0005737">
    <property type="term" value="C:cytoplasm"/>
    <property type="evidence" value="ECO:0000314"/>
    <property type="project" value="PomBase"/>
</dbReference>
<dbReference type="GO" id="GO:0005829">
    <property type="term" value="C:cytosol"/>
    <property type="evidence" value="ECO:0000314"/>
    <property type="project" value="PomBase"/>
</dbReference>
<dbReference type="GO" id="GO:0005634">
    <property type="term" value="C:nucleus"/>
    <property type="evidence" value="ECO:0000314"/>
    <property type="project" value="PomBase"/>
</dbReference>
<dbReference type="GO" id="GO:0000987">
    <property type="term" value="F:cis-regulatory region sequence-specific DNA binding"/>
    <property type="evidence" value="ECO:0000314"/>
    <property type="project" value="PomBase"/>
</dbReference>
<dbReference type="GO" id="GO:0001228">
    <property type="term" value="F:DNA-binding transcription activator activity, RNA polymerase II-specific"/>
    <property type="evidence" value="ECO:0000353"/>
    <property type="project" value="PomBase"/>
</dbReference>
<dbReference type="GO" id="GO:0000981">
    <property type="term" value="F:DNA-binding transcription factor activity, RNA polymerase II-specific"/>
    <property type="evidence" value="ECO:0000318"/>
    <property type="project" value="GO_Central"/>
</dbReference>
<dbReference type="GO" id="GO:0001227">
    <property type="term" value="F:DNA-binding transcription repressor activity, RNA polymerase II-specific"/>
    <property type="evidence" value="ECO:0000314"/>
    <property type="project" value="PomBase"/>
</dbReference>
<dbReference type="GO" id="GO:0000978">
    <property type="term" value="F:RNA polymerase II cis-regulatory region sequence-specific DNA binding"/>
    <property type="evidence" value="ECO:0000314"/>
    <property type="project" value="PomBase"/>
</dbReference>
<dbReference type="GO" id="GO:0008270">
    <property type="term" value="F:zinc ion binding"/>
    <property type="evidence" value="ECO:0007669"/>
    <property type="project" value="UniProtKB-KW"/>
</dbReference>
<dbReference type="GO" id="GO:0010515">
    <property type="term" value="P:negative regulation of induction of conjugation with cellular fusion"/>
    <property type="evidence" value="ECO:0000315"/>
    <property type="project" value="PomBase"/>
</dbReference>
<dbReference type="GO" id="GO:0000122">
    <property type="term" value="P:negative regulation of transcription by RNA polymerase II"/>
    <property type="evidence" value="ECO:0000318"/>
    <property type="project" value="GO_Central"/>
</dbReference>
<dbReference type="GO" id="GO:0045944">
    <property type="term" value="P:positive regulation of transcription by RNA polymerase II"/>
    <property type="evidence" value="ECO:0000315"/>
    <property type="project" value="PomBase"/>
</dbReference>
<dbReference type="CDD" id="cd00202">
    <property type="entry name" value="ZnF_GATA"/>
    <property type="match status" value="1"/>
</dbReference>
<dbReference type="FunFam" id="3.30.50.10:FF:000007">
    <property type="entry name" value="Nitrogen regulatory AreA, N-terminal"/>
    <property type="match status" value="1"/>
</dbReference>
<dbReference type="Gene3D" id="3.30.50.10">
    <property type="entry name" value="Erythroid Transcription Factor GATA-1, subunit A"/>
    <property type="match status" value="1"/>
</dbReference>
<dbReference type="InterPro" id="IPR013860">
    <property type="entry name" value="AreA_GATA"/>
</dbReference>
<dbReference type="InterPro" id="IPR039355">
    <property type="entry name" value="Transcription_factor_GATA"/>
</dbReference>
<dbReference type="InterPro" id="IPR000679">
    <property type="entry name" value="Znf_GATA"/>
</dbReference>
<dbReference type="InterPro" id="IPR013088">
    <property type="entry name" value="Znf_NHR/GATA"/>
</dbReference>
<dbReference type="PANTHER" id="PTHR10071:SF281">
    <property type="entry name" value="BOX A-BINDING FACTOR-RELATED"/>
    <property type="match status" value="1"/>
</dbReference>
<dbReference type="PANTHER" id="PTHR10071">
    <property type="entry name" value="TRANSCRIPTION FACTOR GATA FAMILY MEMBER"/>
    <property type="match status" value="1"/>
</dbReference>
<dbReference type="Pfam" id="PF00320">
    <property type="entry name" value="GATA"/>
    <property type="match status" value="1"/>
</dbReference>
<dbReference type="Pfam" id="PF08550">
    <property type="entry name" value="GATA_AreA"/>
    <property type="match status" value="1"/>
</dbReference>
<dbReference type="PRINTS" id="PR00619">
    <property type="entry name" value="GATAZNFINGER"/>
</dbReference>
<dbReference type="SMART" id="SM00401">
    <property type="entry name" value="ZnF_GATA"/>
    <property type="match status" value="1"/>
</dbReference>
<dbReference type="SUPFAM" id="SSF57716">
    <property type="entry name" value="Glucocorticoid receptor-like (DNA-binding domain)"/>
    <property type="match status" value="1"/>
</dbReference>
<dbReference type="PROSITE" id="PS00344">
    <property type="entry name" value="GATA_ZN_FINGER_1"/>
    <property type="match status" value="1"/>
</dbReference>
<dbReference type="PROSITE" id="PS50114">
    <property type="entry name" value="GATA_ZN_FINGER_2"/>
    <property type="match status" value="1"/>
</dbReference>
<sequence length="855" mass="91777">MDLKFSNFFKEAEHPALVKKFDKSTTDESSSKEDYSTMSDLWKMFSKAKSELSNGRRVENLTWRLMSINLQKNLTPNGDSNTLTPDTFSDPTAPSSAQSVPPTSSAETTADNSDTEMKLNPIPAYSVPADTTGSSLMEFNYIQRRVRKTSFDESTAKSKKRSIADSHFPDPNAMQRPHDLESQPFSYPKIHASNSFNFVKRDIDSSNFSNLDASALPISPPSDFFSVHSHNLPNAPPSIPANSNNSASPNQRIKASPKHADTDVLGLDFDMTPSEPSSFPENGGFPSFVDANTHEQTLFPSSATNSFSFEHGSAGFPIPGSVPSTSYHANTASEDGFSSSYNSQGLFGISSPLSSGVTPNQSFFPDVSGNNIFDVSRNNHEVSSPLIQSPGSYVSMPSINMVSSLPISAPVPNSNSQFPRRPNTFRTNSSKSVGQGSSGVDSNQENAESFNPSISSHNSAEWASGETTGHSSNSPLPGSDMFSPQFMRVGTAMGVAPVRSNSSNNFGQNFFHQTSPQFSAVPHRKVSAQDTNLMGSSPGMYNHMPYLNRATSANSITSPGVLPEGMAASLKKRTTNTAATPQAALPTTLDTKKDRSVSFNINKNAEKPTVSNAAEDKKGDANTRRANATNPTPTCTNCQTRTTPLWRRSPDGQPLCNACGLFMKINGVVRPLSLKTDVIKKRNRGVGTSATPKQSGGRKGSTRKSSSKSSSAKSTAADMKPKADSKSISPGFVGGNQSLSSERIPLDPSMRSPLQQQSSENESKSQSMLSANNLNAGVNDFGLGFSEGLGSAHLDSNDSSMVQGKNDFAPVVDSPLFDAFDTDLGMSSVAESHTMNMDPSDLSRVSKSWDWYSVM</sequence>
<accession>Q10280</accession>
<accession>O94482</accession>
<accession>Q9USK9</accession>
<comment type="function">
    <text>Transcriptional activator.</text>
</comment>
<comment type="subcellular location">
    <subcellularLocation>
        <location evidence="4">Nucleus</location>
    </subcellularLocation>
</comment>
<keyword id="KW-0010">Activator</keyword>
<keyword id="KW-0238">DNA-binding</keyword>
<keyword id="KW-0479">Metal-binding</keyword>
<keyword id="KW-0539">Nucleus</keyword>
<keyword id="KW-0597">Phosphoprotein</keyword>
<keyword id="KW-1185">Reference proteome</keyword>
<keyword id="KW-0804">Transcription</keyword>
<keyword id="KW-0805">Transcription regulation</keyword>
<keyword id="KW-0862">Zinc</keyword>
<keyword id="KW-0863">Zinc-finger</keyword>
<reference key="1">
    <citation type="journal article" date="2002" name="Nature">
        <title>The genome sequence of Schizosaccharomyces pombe.</title>
        <authorList>
            <person name="Wood V."/>
            <person name="Gwilliam R."/>
            <person name="Rajandream M.A."/>
            <person name="Lyne M.H."/>
            <person name="Lyne R."/>
            <person name="Stewart A."/>
            <person name="Sgouros J.G."/>
            <person name="Peat N."/>
            <person name="Hayles J."/>
            <person name="Baker S.G."/>
            <person name="Basham D."/>
            <person name="Bowman S."/>
            <person name="Brooks K."/>
            <person name="Brown D."/>
            <person name="Brown S."/>
            <person name="Chillingworth T."/>
            <person name="Churcher C.M."/>
            <person name="Collins M."/>
            <person name="Connor R."/>
            <person name="Cronin A."/>
            <person name="Davis P."/>
            <person name="Feltwell T."/>
            <person name="Fraser A."/>
            <person name="Gentles S."/>
            <person name="Goble A."/>
            <person name="Hamlin N."/>
            <person name="Harris D.E."/>
            <person name="Hidalgo J."/>
            <person name="Hodgson G."/>
            <person name="Holroyd S."/>
            <person name="Hornsby T."/>
            <person name="Howarth S."/>
            <person name="Huckle E.J."/>
            <person name="Hunt S."/>
            <person name="Jagels K."/>
            <person name="James K.D."/>
            <person name="Jones L."/>
            <person name="Jones M."/>
            <person name="Leather S."/>
            <person name="McDonald S."/>
            <person name="McLean J."/>
            <person name="Mooney P."/>
            <person name="Moule S."/>
            <person name="Mungall K.L."/>
            <person name="Murphy L.D."/>
            <person name="Niblett D."/>
            <person name="Odell C."/>
            <person name="Oliver K."/>
            <person name="O'Neil S."/>
            <person name="Pearson D."/>
            <person name="Quail M.A."/>
            <person name="Rabbinowitsch E."/>
            <person name="Rutherford K.M."/>
            <person name="Rutter S."/>
            <person name="Saunders D."/>
            <person name="Seeger K."/>
            <person name="Sharp S."/>
            <person name="Skelton J."/>
            <person name="Simmonds M.N."/>
            <person name="Squares R."/>
            <person name="Squares S."/>
            <person name="Stevens K."/>
            <person name="Taylor K."/>
            <person name="Taylor R.G."/>
            <person name="Tivey A."/>
            <person name="Walsh S.V."/>
            <person name="Warren T."/>
            <person name="Whitehead S."/>
            <person name="Woodward J.R."/>
            <person name="Volckaert G."/>
            <person name="Aert R."/>
            <person name="Robben J."/>
            <person name="Grymonprez B."/>
            <person name="Weltjens I."/>
            <person name="Vanstreels E."/>
            <person name="Rieger M."/>
            <person name="Schaefer M."/>
            <person name="Mueller-Auer S."/>
            <person name="Gabel C."/>
            <person name="Fuchs M."/>
            <person name="Duesterhoeft A."/>
            <person name="Fritzc C."/>
            <person name="Holzer E."/>
            <person name="Moestl D."/>
            <person name="Hilbert H."/>
            <person name="Borzym K."/>
            <person name="Langer I."/>
            <person name="Beck A."/>
            <person name="Lehrach H."/>
            <person name="Reinhardt R."/>
            <person name="Pohl T.M."/>
            <person name="Eger P."/>
            <person name="Zimmermann W."/>
            <person name="Wedler H."/>
            <person name="Wambutt R."/>
            <person name="Purnelle B."/>
            <person name="Goffeau A."/>
            <person name="Cadieu E."/>
            <person name="Dreano S."/>
            <person name="Gloux S."/>
            <person name="Lelaure V."/>
            <person name="Mottier S."/>
            <person name="Galibert F."/>
            <person name="Aves S.J."/>
            <person name="Xiang Z."/>
            <person name="Hunt C."/>
            <person name="Moore K."/>
            <person name="Hurst S.M."/>
            <person name="Lucas M."/>
            <person name="Rochet M."/>
            <person name="Gaillardin C."/>
            <person name="Tallada V.A."/>
            <person name="Garzon A."/>
            <person name="Thode G."/>
            <person name="Daga R.R."/>
            <person name="Cruzado L."/>
            <person name="Jimenez J."/>
            <person name="Sanchez M."/>
            <person name="del Rey F."/>
            <person name="Benito J."/>
            <person name="Dominguez A."/>
            <person name="Revuelta J.L."/>
            <person name="Moreno S."/>
            <person name="Armstrong J."/>
            <person name="Forsburg S.L."/>
            <person name="Cerutti L."/>
            <person name="Lowe T."/>
            <person name="McCombie W.R."/>
            <person name="Paulsen I."/>
            <person name="Potashkin J."/>
            <person name="Shpakovski G.V."/>
            <person name="Ussery D."/>
            <person name="Barrell B.G."/>
            <person name="Nurse P."/>
        </authorList>
    </citation>
    <scope>NUCLEOTIDE SEQUENCE [LARGE SCALE GENOMIC DNA]</scope>
    <source>
        <strain>972 / ATCC 24843</strain>
    </source>
</reference>
<reference key="2">
    <citation type="journal article" date="1998" name="Gene">
        <title>Molecular cloning of gaf1, a Schizosaccharomyces pombe GATA factor, which can function as a transcriptional activator.</title>
        <authorList>
            <person name="Hoe K.-L."/>
            <person name="Won M.S."/>
            <person name="Chung K.-S."/>
            <person name="Park S.-K."/>
            <person name="Kim D.-U."/>
            <person name="Jang Y.-J."/>
            <person name="Yoo O.-J."/>
            <person name="Yoo H.-S."/>
        </authorList>
    </citation>
    <scope>NUCLEOTIDE SEQUENCE [GENOMIC DNA] OF 566-855</scope>
</reference>
<reference key="3">
    <citation type="journal article" date="2008" name="J. Proteome Res.">
        <title>Phosphoproteome analysis of fission yeast.</title>
        <authorList>
            <person name="Wilson-Grady J.T."/>
            <person name="Villen J."/>
            <person name="Gygi S.P."/>
        </authorList>
    </citation>
    <scope>PHOSPHORYLATION [LARGE SCALE ANALYSIS] AT SER-150; SER-727 AND SER-729</scope>
    <scope>IDENTIFICATION BY MASS SPECTROMETRY</scope>
</reference>
<gene>
    <name type="primary">gaf1</name>
    <name type="ORF">SPCC1902.01</name>
    <name type="ORF">SPCC417.01c</name>
</gene>
<protein>
    <recommendedName>
        <fullName>Transcription factor gaf1</fullName>
        <shortName>Gaf-1</shortName>
    </recommendedName>
</protein>
<organism>
    <name type="scientific">Schizosaccharomyces pombe (strain 972 / ATCC 24843)</name>
    <name type="common">Fission yeast</name>
    <dbReference type="NCBI Taxonomy" id="284812"/>
    <lineage>
        <taxon>Eukaryota</taxon>
        <taxon>Fungi</taxon>
        <taxon>Dikarya</taxon>
        <taxon>Ascomycota</taxon>
        <taxon>Taphrinomycotina</taxon>
        <taxon>Schizosaccharomycetes</taxon>
        <taxon>Schizosaccharomycetales</taxon>
        <taxon>Schizosaccharomycetaceae</taxon>
        <taxon>Schizosaccharomyces</taxon>
    </lineage>
</organism>
<proteinExistence type="evidence at protein level"/>